<feature type="chain" id="PRO_0000094759" description="Tyrosine-protein phosphatase non-receptor type 6">
    <location>
        <begin position="1"/>
        <end position="595"/>
    </location>
</feature>
<feature type="domain" description="SH2 1" evidence="5">
    <location>
        <begin position="4"/>
        <end position="100"/>
    </location>
</feature>
<feature type="domain" description="SH2 2" evidence="5">
    <location>
        <begin position="110"/>
        <end position="213"/>
    </location>
</feature>
<feature type="domain" description="Tyrosine-protein phosphatase" evidence="4">
    <location>
        <begin position="244"/>
        <end position="515"/>
    </location>
</feature>
<feature type="region of interest" description="Disordered" evidence="7">
    <location>
        <begin position="536"/>
        <end position="595"/>
    </location>
</feature>
<feature type="compositionally biased region" description="Basic and acidic residues" evidence="7">
    <location>
        <begin position="558"/>
        <end position="589"/>
    </location>
</feature>
<feature type="active site" description="Phosphocysteine intermediate" evidence="4 6">
    <location>
        <position position="453"/>
    </location>
</feature>
<feature type="binding site" evidence="1">
    <location>
        <position position="419"/>
    </location>
    <ligand>
        <name>substrate</name>
    </ligand>
</feature>
<feature type="binding site" evidence="1">
    <location>
        <begin position="453"/>
        <end position="459"/>
    </location>
    <ligand>
        <name>substrate</name>
    </ligand>
</feature>
<feature type="binding site" evidence="1">
    <location>
        <position position="500"/>
    </location>
    <ligand>
        <name>substrate</name>
    </ligand>
</feature>
<feature type="modified residue" description="Phosphoserine" evidence="3">
    <location>
        <position position="10"/>
    </location>
</feature>
<feature type="modified residue" description="Phosphoserine" evidence="24">
    <location>
        <position position="57"/>
    </location>
</feature>
<feature type="modified residue" description="Phosphotyrosine" evidence="2">
    <location>
        <position position="64"/>
    </location>
</feature>
<feature type="modified residue" description="Phosphotyrosine" evidence="23">
    <location>
        <position position="377"/>
    </location>
</feature>
<feature type="modified residue" description="Phosphothreonine; by TAOK3" evidence="2">
    <location>
        <position position="394"/>
    </location>
</feature>
<feature type="modified residue" description="Phosphotyrosine" evidence="23">
    <location>
        <position position="536"/>
    </location>
</feature>
<feature type="modified residue" description="Phosphotyrosine; by LYN" evidence="2">
    <location>
        <position position="564"/>
    </location>
</feature>
<feature type="cross-link" description="Glycyl lysine isopeptide (Lys-Gly) (interchain with G-Cter in ubiquitin)" evidence="2">
    <location>
        <position position="308"/>
    </location>
</feature>
<feature type="splice variant" id="VSP_005132" description="In isoform 3." evidence="22">
    <location>
        <begin position="1"/>
        <end position="39"/>
    </location>
</feature>
<feature type="splice variant" id="VSP_005131" description="In isoform 2." evidence="22">
    <original>MVR</original>
    <variation>MLSRG</variation>
    <location>
        <begin position="1"/>
        <end position="3"/>
    </location>
</feature>
<feature type="splice variant" id="VSP_005133" description="In isoform 3." evidence="22">
    <original>SLSVR</original>
    <variation>MLSRG</variation>
    <location>
        <begin position="40"/>
        <end position="44"/>
    </location>
</feature>
<feature type="sequence variant" description="In motheaten (me).">
    <original>EYYTQQQGILQDRDGTIIHLKYP</original>
    <variation>VPRPHIWRAGGVTAAGQGRALD</variation>
    <location>
        <begin position="77"/>
        <end position="99"/>
    </location>
</feature>
<feature type="sequence variant" description="In motheaten (me).">
    <location>
        <begin position="100"/>
        <end position="595"/>
    </location>
</feature>
<feature type="mutagenesis site" description="Slight reduction in binding to phosphorylated Lilrb4a." evidence="21">
    <original>RPSR</original>
    <variation>KPSE</variation>
    <location>
        <begin position="30"/>
        <end position="33"/>
    </location>
</feature>
<feature type="mutagenesis site" description="Abolishes binding to phosphorylated Lilrb4a." evidence="21">
    <original>R</original>
    <variation>K</variation>
    <location>
        <position position="136"/>
    </location>
</feature>
<feature type="mutagenesis site" description="Mice display a low bone mass density and are associated with osteopenia and elevated inflammatory cytokines." evidence="12">
    <original>I</original>
    <variation>F</variation>
    <location>
        <position position="482"/>
    </location>
</feature>
<feature type="sequence conflict" description="In Ref. 1; AAA37796." evidence="22" ref="1">
    <original>A</original>
    <variation>R</variation>
    <location>
        <position position="240"/>
    </location>
</feature>
<feature type="sequence conflict" description="In Ref. 1; AAA37796." evidence="22" ref="1">
    <original>K</original>
    <variation>Q</variation>
    <location>
        <position position="572"/>
    </location>
</feature>
<feature type="sequence conflict" description="In Ref. 6; AAH12660." evidence="22" ref="6">
    <original>E</original>
    <variation>D</variation>
    <location>
        <position position="586"/>
    </location>
</feature>
<gene>
    <name type="primary">Ptpn6</name>
    <name type="synonym">Hcp</name>
    <name type="synonym">Hcph</name>
    <name type="synonym">Ptp1C</name>
</gene>
<proteinExistence type="evidence at protein level"/>
<sequence>MVRWFHRDLSGPDAETLLKGRGVPGSFLARPSRKNQGDFSLSVRVDDQVTHIRIQNSGDFYDLYGGEKFATLTELVEYYTQQQGILQDRDGTIIHLKYPLNCSDPTSERWYHGHISGGQAESLLQAKGEPWTFLVRESLSQPGDFVLSVLNDQPKAGPGSPLRVTHIKVMCEGGRYTVGGSETFDSLTDLVEHFKKTGIEEASGAFVYLRQPYYATRVNAADIENRVLELNKKQESEDTAKAGFWEEFESLQKQEVKNLHQRLEGQRPENKSKNRYKNILPFDHSRVILQGRDSNIPGSDYINANYVKNQLLGPDENSKTYIASQGCLDATVNDFWQMAWQENTRVIVMTTREVEKGRNKCVPYWPEVGTQRVYGLYSVTNSREHDTAEYKLRTLQISPLDNGDLVREIWHYQYLSWPDHGVPSEPGGVLSFLDQINQRQESLPHAGPIIVHCSAGIGRTGTIIVIDMLMESISTKGLDCDIDIQKTIQMVRAQRSGMVQTEAQYKFIYVAIAQFIETTKKKLEIIQSQKGQESEYGNITYPPAVRSAHAKASRTSSKHKEEVYENVHSKSKKEEKVKKQRSADKEKNKGSLKRK</sequence>
<protein>
    <recommendedName>
        <fullName>Tyrosine-protein phosphatase non-receptor type 6</fullName>
        <ecNumber evidence="17">3.1.3.48</ecNumber>
    </recommendedName>
    <alternativeName>
        <fullName>70Z-SHP</fullName>
    </alternativeName>
    <alternativeName>
        <fullName>Hematopoietic cell protein-tyrosine phosphatase</fullName>
    </alternativeName>
    <alternativeName>
        <fullName>PTPTY-42</fullName>
    </alternativeName>
    <alternativeName>
        <fullName>Protein-tyrosine phosphatase 1C</fullName>
        <shortName>PTP-1C</shortName>
    </alternativeName>
    <alternativeName>
        <fullName>SH-PTP1</fullName>
        <shortName>SHP-1</shortName>
    </alternativeName>
</protein>
<keyword id="KW-0025">Alternative splicing</keyword>
<keyword id="KW-0963">Cytoplasm</keyword>
<keyword id="KW-0903">Direct protein sequencing</keyword>
<keyword id="KW-0225">Disease variant</keyword>
<keyword id="KW-0378">Hydrolase</keyword>
<keyword id="KW-1017">Isopeptide bond</keyword>
<keyword id="KW-0539">Nucleus</keyword>
<keyword id="KW-0597">Phosphoprotein</keyword>
<keyword id="KW-0904">Protein phosphatase</keyword>
<keyword id="KW-1185">Reference proteome</keyword>
<keyword id="KW-0677">Repeat</keyword>
<keyword id="KW-0727">SH2 domain</keyword>
<keyword id="KW-0832">Ubl conjugation</keyword>
<accession>P29351</accession>
<accession>O35128</accession>
<accession>Q63872</accession>
<accession>Q63873</accession>
<accession>Q63874</accession>
<accession>Q921G3</accession>
<accession>Q9QVA6</accession>
<accession>Q9QVA7</accession>
<accession>Q9QVA8</accession>
<accession>Q9R0V6</accession>
<reference key="1">
    <citation type="journal article" date="1992" name="Mol. Cell. Biol.">
        <title>Protein tyrosine phosphatase containing SH2 domains: characterization, preferential expression in hematopoietic cells, and localization to human chromosome 12p12-p13.</title>
        <authorList>
            <person name="Yi T."/>
            <person name="Cleveland J.L."/>
            <person name="Ihle J.N."/>
        </authorList>
    </citation>
    <scope>NUCLEOTIDE SEQUENCE [MRNA]</scope>
    <source>
        <strain>DBA/2J</strain>
    </source>
</reference>
<reference key="2">
    <citation type="journal article" date="1992" name="Mol. Cell. Biol.">
        <title>Characterization of hematopoietic intracellular protein tyrosine phosphatases: description of a phosphatase containing an SH2 domain and another enriched in proline-, glutamic acid-, serine-, and threonine-rich sequences.</title>
        <authorList>
            <person name="Matthews R.J."/>
            <person name="Bowne D.B."/>
            <person name="Flores E."/>
            <person name="Thomas M.L."/>
        </authorList>
    </citation>
    <scope>NUCLEOTIDE SEQUENCE [MRNA]</scope>
</reference>
<reference key="3">
    <citation type="journal article" date="1993" name="Cell">
        <title>Mutations at the murine motheaten locus are within the hematopoietic cell protein-tyrosine phosphatase (Hcph) gene.</title>
        <authorList>
            <person name="Schultz L.D."/>
            <person name="Schweitzer P.A."/>
            <person name="Rajan T.V."/>
            <person name="Yi T."/>
            <person name="Ihle J.N."/>
            <person name="Matthews R.J."/>
            <person name="Thomas M.L."/>
            <person name="Beier D.R."/>
        </authorList>
    </citation>
    <scope>NUCLEOTIDE SEQUENCE [MRNA]</scope>
    <scope>VARIANTS MOTHEATEN AND VIABLE MOTHEATEN</scope>
    <source>
        <strain>C57BL/6J</strain>
        <tissue>Bone marrow</tissue>
    </source>
</reference>
<reference key="4">
    <citation type="journal article" date="1998" name="Genome Res.">
        <title>Comparative sequence analysis of a gene-rich cluster at human chromosome 12p13 and its syntenic region in mouse chromosome 6.</title>
        <authorList>
            <person name="Ansari-Lari M.A."/>
            <person name="Oeltjen J.C."/>
            <person name="Schwartz S."/>
            <person name="Zhang Z."/>
            <person name="Muzny D.M."/>
            <person name="Lu J."/>
            <person name="Gorrell J.H."/>
            <person name="Chinault A.C."/>
            <person name="Belmont J.W."/>
            <person name="Miller W."/>
            <person name="Gibbs R.A."/>
        </authorList>
    </citation>
    <scope>NUCLEOTIDE SEQUENCE [GENOMIC DNA] (ISOFORMS 1 AND 3)</scope>
</reference>
<reference key="5">
    <citation type="journal article" date="1999" name="J. Biol. Chem.">
        <title>Murine SHP-1 splice variants with altered Src homology 2 (SH2) domains. Implications for the SH2-mediated intramolecular regulation of SHP-1.</title>
        <authorList>
            <person name="Martin A."/>
            <person name="Tsui H.W."/>
            <person name="Shulman M.J."/>
            <person name="Isenman D."/>
            <person name="Tsui F.W."/>
        </authorList>
    </citation>
    <scope>NUCLEOTIDE SEQUENCE [GENOMIC DNA] (ISOFORMS 1 AND 2)</scope>
    <scope>SUBUNIT</scope>
    <source>
        <strain>C3H/HeJ</strain>
        <tissue>Adrenal gland</tissue>
    </source>
</reference>
<reference key="6">
    <citation type="journal article" date="2004" name="Genome Res.">
        <title>The status, quality, and expansion of the NIH full-length cDNA project: the Mammalian Gene Collection (MGC).</title>
        <authorList>
            <consortium name="The MGC Project Team"/>
        </authorList>
    </citation>
    <scope>NUCLEOTIDE SEQUENCE [LARGE SCALE MRNA]</scope>
</reference>
<reference key="7">
    <citation type="journal article" date="1992" name="J. Biol. Chem.">
        <title>Protein tyrosine phosphatase-1C is rapidly phosphorylated in tyrosine in macrophages in response to colony stimulating factor-1.</title>
        <authorList>
            <person name="Yeung Y.-G."/>
            <person name="Berg K.L."/>
            <person name="Pixley F.J."/>
            <person name="Angeletti R.H."/>
            <person name="Stanley E.R."/>
        </authorList>
    </citation>
    <scope>PROTEIN SEQUENCE OF 54-68; 128-135; 137-151; 242-252; 278-285; 293-308 AND 373-382</scope>
    <scope>PHOSPHORYLATION</scope>
</reference>
<reference key="8">
    <citation type="journal article" date="1991" name="Blood">
        <title>Identification of novel protein tyrosine phosphatases of hematopoietic cells by polymerase chain reaction amplification.</title>
        <authorList>
            <person name="Yi T."/>
            <person name="Cleveland J.L."/>
            <person name="Ihle J.N."/>
        </authorList>
    </citation>
    <scope>NUCLEOTIDE SEQUENCE [MRNA] OF 342-451</scope>
    <scope>TISSUE SPECIFICITY</scope>
    <source>
        <strain>BALB/cJ</strain>
        <tissue>Myeloid leukemia cell</tissue>
    </source>
</reference>
<reference key="9">
    <citation type="journal article" date="1998" name="J. Biol. Chem.">
        <title>High expression of inhibitory receptor SHPS-1 and its association with protein tyrosine phosphatase SHP-1 in macrophages.</title>
        <authorList>
            <person name="Veillette A."/>
            <person name="Thibaudeau E."/>
            <person name="Latour S."/>
        </authorList>
    </citation>
    <scope>INTERACTION WITH SIRPA</scope>
</reference>
<reference key="10">
    <citation type="journal article" date="1998" name="Mol. Cell. Biol.">
        <title>SHP-1 binds and negatively modulates the c-Kit receptor by interaction with tyrosine 569 in the c-Kit juxtamembrane domain.</title>
        <authorList>
            <person name="Kozlowski M."/>
            <person name="Larose L."/>
            <person name="Lee F."/>
            <person name="Le D.M."/>
            <person name="Rottapel R."/>
            <person name="Siminovitch K.A."/>
        </authorList>
    </citation>
    <scope>INTERACTION WITH KIT</scope>
    <scope>FUNCTION IN MODULATING KIT SIGNALING</scope>
    <scope>PHOSPHORYLATION</scope>
</reference>
<reference key="11">
    <citation type="journal article" date="1999" name="J. Biol. Chem.">
        <title>The carboxyl-terminal region of biliary glycoprotein controls its tyrosine phosphorylation and association with protein-tyrosine phosphatases SHP-1 and SHP-2 in epithelial cells.</title>
        <authorList>
            <person name="Huber M."/>
            <person name="Izzi L."/>
            <person name="Grondin P."/>
            <person name="Houde C."/>
            <person name="Kunath T."/>
            <person name="Veillette A."/>
            <person name="Beauchemin N."/>
        </authorList>
    </citation>
    <scope>INTERACTION WITH CEACAM1</scope>
</reference>
<reference key="12">
    <citation type="journal article" date="1999" name="J. Biol. Chem.">
        <title>gp49B1 inhibits IgE-initiated mast cell activation through both immunoreceptor tyrosine-based inhibitory motifs, recruitment of src homology 2 domain-containing phosphatase-1, and suppression of early and late calcium mobilization.</title>
        <authorList>
            <person name="Lu-Kuo J.M."/>
            <person name="Joyal D.M."/>
            <person name="Austen K.F."/>
            <person name="Katz H.R."/>
        </authorList>
    </citation>
    <scope>FUNCTION</scope>
    <scope>INTERACTION WITH LILRB4A</scope>
</reference>
<reference key="13">
    <citation type="journal article" date="1999" name="J. Immunol.">
        <title>Specificity of the SH2 domains of SHP-1 in the interaction with the immunoreceptor tyrosine-based inhibitory motif-bearing receptor gp49B.</title>
        <authorList>
            <person name="Wang L.L."/>
            <person name="Blasioli J."/>
            <person name="Plas D.R."/>
            <person name="Thomas M.L."/>
            <person name="Yokoyama W.M."/>
        </authorList>
    </citation>
    <scope>INTERACTION WITH LILRB4A</scope>
    <scope>MUTAGENESIS OF 30-ARG--ARG-33 AND ARG-136</scope>
</reference>
<reference key="14">
    <citation type="journal article" date="1999" name="Oncogene">
        <title>Paired immunoglobulin-like receptor B (PIR-B) inhibits BCR-induced activation of Syk and Btk by SHP-1.</title>
        <authorList>
            <person name="Maeda A."/>
            <person name="Scharenberg A.M."/>
            <person name="Tsukada S."/>
            <person name="Bolen J.B."/>
            <person name="Kinet J.P."/>
            <person name="Kurosaki T."/>
        </authorList>
    </citation>
    <scope>INTERACTION WITH PIRB</scope>
</reference>
<reference key="15">
    <citation type="journal article" date="2003" name="J. Immunol.">
        <title>CMRF-35-like molecule-1, a novel mouse myeloid receptor, can inhibit osteoclast formation.</title>
        <authorList>
            <person name="Chung D.-H."/>
            <person name="Humphrey M.B."/>
            <person name="Nakamura M.C."/>
            <person name="Ginzinger D.G."/>
            <person name="Seaman W.E."/>
            <person name="Daws M.R."/>
        </authorList>
    </citation>
    <scope>INTERACTION WITH CD300LF</scope>
    <source>
        <strain>C57BL/6J</strain>
    </source>
</reference>
<reference key="16">
    <citation type="journal article" date="2007" name="J. Immunol.">
        <title>Quantitative time-resolved phosphoproteomic analysis of mast cell signaling.</title>
        <authorList>
            <person name="Cao L."/>
            <person name="Yu K."/>
            <person name="Banh C."/>
            <person name="Nguyen V."/>
            <person name="Ritz A."/>
            <person name="Raphael B.J."/>
            <person name="Kawakami Y."/>
            <person name="Kawakami T."/>
            <person name="Salomon A.R."/>
        </authorList>
    </citation>
    <scope>PHOSPHORYLATION [LARGE SCALE ANALYSIS] AT TYR-377 AND TYR-536</scope>
    <scope>IDENTIFICATION BY MASS SPECTROMETRY [LARGE SCALE ANALYSIS]</scope>
    <source>
        <tissue>Mast cell</tissue>
    </source>
</reference>
<reference key="17">
    <citation type="journal article" date="2009" name="Immunity">
        <title>The phagosomal proteome in interferon-gamma-activated macrophages.</title>
        <authorList>
            <person name="Trost M."/>
            <person name="English L."/>
            <person name="Lemieux S."/>
            <person name="Courcelles M."/>
            <person name="Desjardins M."/>
            <person name="Thibault P."/>
        </authorList>
    </citation>
    <scope>IDENTIFICATION BY MASS SPECTROMETRY [LARGE SCALE ANALYSIS]</scope>
</reference>
<reference key="18">
    <citation type="journal article" date="2009" name="J. Bone Miner. Res.">
        <title>New variants in the Enpp1 and Ptpn6 genes cause low BMD, crystal-related arthropathy, and vascular calcification.</title>
        <authorList>
            <person name="Babij P."/>
            <person name="Roudier M."/>
            <person name="Graves T."/>
            <person name="Han C.Y."/>
            <person name="Chhoa M."/>
            <person name="Li C.M."/>
            <person name="Juan T."/>
            <person name="Morony S."/>
            <person name="Grisanti M."/>
            <person name="Li X."/>
            <person name="Yu L."/>
            <person name="Dwyer D."/>
            <person name="Lloyd D.J."/>
            <person name="Bass M.B."/>
            <person name="Richards W.G."/>
            <person name="Ebeling C."/>
            <person name="Amato J."/>
            <person name="Carlson G."/>
        </authorList>
    </citation>
    <scope>MUTAGENESIS OF ILE-482</scope>
</reference>
<reference key="19">
    <citation type="journal article" date="2009" name="J. Cell Biol.">
        <title>Homophilic adhesion and CEACAM1-S regulate dimerization of CEACAM1-L and recruitment of SHP-2 and c-Src.</title>
        <authorList>
            <person name="Mueller M.M."/>
            <person name="Klaile E."/>
            <person name="Vorontsova O."/>
            <person name="Singer B.B."/>
            <person name="Obrink B."/>
        </authorList>
    </citation>
    <scope>INTERACTION WITH CEACAM1</scope>
</reference>
<reference key="20">
    <citation type="journal article" date="2010" name="Cell">
        <title>A tissue-specific atlas of mouse protein phosphorylation and expression.</title>
        <authorList>
            <person name="Huttlin E.L."/>
            <person name="Jedrychowski M.P."/>
            <person name="Elias J.E."/>
            <person name="Goswami T."/>
            <person name="Rad R."/>
            <person name="Beausoleil S.A."/>
            <person name="Villen J."/>
            <person name="Haas W."/>
            <person name="Sowa M.E."/>
            <person name="Gygi S.P."/>
        </authorList>
    </citation>
    <scope>PHOSPHORYLATION [LARGE SCALE ANALYSIS] AT SER-57</scope>
    <scope>IDENTIFICATION BY MASS SPECTROMETRY [LARGE SCALE ANALYSIS]</scope>
    <source>
        <tissue>Heart</tissue>
        <tissue>Kidney</tissue>
        <tissue>Liver</tissue>
        <tissue>Lung</tissue>
        <tissue>Pancreas</tissue>
        <tissue>Spleen</tissue>
    </source>
</reference>
<reference key="21">
    <citation type="journal article" date="2010" name="Nat. Immunol.">
        <title>An immunoglobulin-like receptor, Allergin-1, inhibits immunoglobulin E-mediated immediate hypersensitivity reactions.</title>
        <authorList>
            <person name="Hitomi K."/>
            <person name="Tahara-Hanaoka S."/>
            <person name="Someya S."/>
            <person name="Fujiki A."/>
            <person name="Tada H."/>
            <person name="Sugiyama T."/>
            <person name="Shibayama S."/>
            <person name="Shibuya K."/>
            <person name="Shibuya A."/>
        </authorList>
    </citation>
    <scope>INTERACTION WITH MILR1</scope>
</reference>
<reference key="22">
    <citation type="journal article" date="2012" name="Sci. Signal.">
        <title>Mice lacking the ITIM-containing receptor G6b-B exhibit macrothrombocytopenia and aberrant platelet function.</title>
        <authorList>
            <person name="Mazharian A."/>
            <person name="Wang Y.J."/>
            <person name="Mori J."/>
            <person name="Bem D."/>
            <person name="Finney B."/>
            <person name="Heising S."/>
            <person name="Gissen P."/>
            <person name="White J.G."/>
            <person name="Berndt M.C."/>
            <person name="Gardiner E.E."/>
            <person name="Nieswandt B."/>
            <person name="Douglas M.R."/>
            <person name="Campbell R.D."/>
            <person name="Watson S.P."/>
            <person name="Senis Y.A."/>
        </authorList>
    </citation>
    <scope>INTERACTION WITH MPIG6B</scope>
</reference>
<reference key="23">
    <citation type="journal article" date="2018" name="Biochem. Biophys. Res. Commun.">
        <title>Moesin and myosin IIA modulate phagolysosomal biogenesis in macrophages.</title>
        <authorList>
            <person name="Gomez C.P."/>
            <person name="Descoteaux A."/>
        </authorList>
    </citation>
    <scope>INTERACTION WITH MOESIN/MSN</scope>
</reference>
<reference key="24">
    <citation type="journal article" date="2021" name="J. Immunol.">
        <title>The Protein Tyrosine Phosphatase SHP-1 (PTPN6) but Not CD45 (PTPRC) Is Essential for the Ligand-Mediated Regulation of CD22 in BCR-Ligated B Cells.</title>
        <authorList>
            <person name="Alborzian Deh Sheikh A."/>
            <person name="Akatsu C."/>
            <person name="Abdu-Allah H.H.M."/>
            <person name="Suganuma Y."/>
            <person name="Imamura A."/>
            <person name="Ando H."/>
            <person name="Takematsu H."/>
            <person name="Ishida H."/>
            <person name="Tsubata T."/>
        </authorList>
    </citation>
    <scope>FUNCTION</scope>
    <scope>CATALYTIC ACTIVITY</scope>
</reference>
<name>PTN6_MOUSE</name>
<dbReference type="EC" id="3.1.3.48" evidence="17"/>
<dbReference type="EMBL" id="M68902">
    <property type="protein sequence ID" value="AAA37796.1"/>
    <property type="molecule type" value="mRNA"/>
</dbReference>
<dbReference type="EMBL" id="M90389">
    <property type="protein sequence ID" value="AAA40007.1"/>
    <property type="molecule type" value="mRNA"/>
</dbReference>
<dbReference type="EMBL" id="S63763">
    <property type="status" value="NOT_ANNOTATED_CDS"/>
    <property type="molecule type" value="mRNA"/>
</dbReference>
<dbReference type="EMBL" id="S63764">
    <property type="status" value="NOT_ANNOTATED_CDS"/>
    <property type="molecule type" value="mRNA"/>
</dbReference>
<dbReference type="EMBL" id="S63803">
    <property type="status" value="NOT_ANNOTATED_CDS"/>
    <property type="molecule type" value="mRNA"/>
</dbReference>
<dbReference type="EMBL" id="AC002397">
    <property type="protein sequence ID" value="AAC36009.1"/>
    <property type="molecule type" value="Genomic_DNA"/>
</dbReference>
<dbReference type="EMBL" id="AC002397">
    <property type="protein sequence ID" value="AAC36008.1"/>
    <property type="molecule type" value="Genomic_DNA"/>
</dbReference>
<dbReference type="EMBL" id="U65955">
    <property type="protein sequence ID" value="AAD00152.1"/>
    <property type="molecule type" value="Genomic_DNA"/>
</dbReference>
<dbReference type="EMBL" id="U65952">
    <property type="protein sequence ID" value="AAD00152.1"/>
    <property type="status" value="JOINED"/>
    <property type="molecule type" value="Genomic_DNA"/>
</dbReference>
<dbReference type="EMBL" id="U65953">
    <property type="protein sequence ID" value="AAD00152.1"/>
    <property type="status" value="JOINED"/>
    <property type="molecule type" value="Genomic_DNA"/>
</dbReference>
<dbReference type="EMBL" id="U65954">
    <property type="protein sequence ID" value="AAD00152.1"/>
    <property type="status" value="JOINED"/>
    <property type="molecule type" value="Genomic_DNA"/>
</dbReference>
<dbReference type="EMBL" id="U65955">
    <property type="protein sequence ID" value="AAD00151.1"/>
    <property type="molecule type" value="Genomic_DNA"/>
</dbReference>
<dbReference type="EMBL" id="U65951">
    <property type="protein sequence ID" value="AAD00151.1"/>
    <property type="status" value="JOINED"/>
    <property type="molecule type" value="Genomic_DNA"/>
</dbReference>
<dbReference type="EMBL" id="U65952">
    <property type="protein sequence ID" value="AAD00151.1"/>
    <property type="status" value="JOINED"/>
    <property type="molecule type" value="Genomic_DNA"/>
</dbReference>
<dbReference type="EMBL" id="U65953">
    <property type="protein sequence ID" value="AAD00151.1"/>
    <property type="status" value="JOINED"/>
    <property type="molecule type" value="Genomic_DNA"/>
</dbReference>
<dbReference type="EMBL" id="U65954">
    <property type="protein sequence ID" value="AAD00151.1"/>
    <property type="status" value="JOINED"/>
    <property type="molecule type" value="Genomic_DNA"/>
</dbReference>
<dbReference type="EMBL" id="BC012660">
    <property type="protein sequence ID" value="AAH12660.1"/>
    <property type="molecule type" value="mRNA"/>
</dbReference>
<dbReference type="CCDS" id="CCDS39628.1">
    <molecule id="P29351-1"/>
</dbReference>
<dbReference type="CCDS" id="CCDS51908.1">
    <molecule id="P29351-2"/>
</dbReference>
<dbReference type="PIR" id="A44390">
    <property type="entry name" value="A44390"/>
</dbReference>
<dbReference type="RefSeq" id="NP_001071173.1">
    <molecule id="P29351-2"/>
    <property type="nucleotide sequence ID" value="NM_001077705.2"/>
</dbReference>
<dbReference type="RefSeq" id="NP_038573.2">
    <molecule id="P29351-1"/>
    <property type="nucleotide sequence ID" value="NM_013545.3"/>
</dbReference>
<dbReference type="SMR" id="P29351"/>
<dbReference type="BioGRID" id="200256">
    <property type="interactions" value="23"/>
</dbReference>
<dbReference type="CORUM" id="P29351"/>
<dbReference type="DIP" id="DIP-41455N"/>
<dbReference type="ELM" id="P29351"/>
<dbReference type="FunCoup" id="P29351">
    <property type="interactions" value="1999"/>
</dbReference>
<dbReference type="IntAct" id="P29351">
    <property type="interactions" value="15"/>
</dbReference>
<dbReference type="MINT" id="P29351"/>
<dbReference type="STRING" id="10090.ENSMUSP00000004377"/>
<dbReference type="CarbonylDB" id="P29351"/>
<dbReference type="GlyGen" id="P29351">
    <property type="glycosylation" value="2 sites, 1 N-linked glycan (1 site), 1 O-linked glycan (1 site)"/>
</dbReference>
<dbReference type="iPTMnet" id="P29351"/>
<dbReference type="PhosphoSitePlus" id="P29351"/>
<dbReference type="SwissPalm" id="P29351"/>
<dbReference type="jPOST" id="P29351"/>
<dbReference type="PaxDb" id="10090-ENSMUSP00000129124"/>
<dbReference type="PeptideAtlas" id="P29351"/>
<dbReference type="ProteomicsDB" id="301880">
    <molecule id="P29351-1"/>
</dbReference>
<dbReference type="ProteomicsDB" id="301881">
    <molecule id="P29351-2"/>
</dbReference>
<dbReference type="ProteomicsDB" id="301882">
    <molecule id="P29351-3"/>
</dbReference>
<dbReference type="Antibodypedia" id="728">
    <property type="antibodies" value="1032 antibodies from 48 providers"/>
</dbReference>
<dbReference type="DNASU" id="15170"/>
<dbReference type="Ensembl" id="ENSMUST00000004377.15">
    <molecule id="P29351-2"/>
    <property type="protein sequence ID" value="ENSMUSP00000004377.9"/>
    <property type="gene ID" value="ENSMUSG00000004266.16"/>
</dbReference>
<dbReference type="Ensembl" id="ENSMUST00000112484.10">
    <molecule id="P29351-1"/>
    <property type="protein sequence ID" value="ENSMUSP00000108103.4"/>
    <property type="gene ID" value="ENSMUSG00000004266.16"/>
</dbReference>
<dbReference type="Ensembl" id="ENSMUST00000171549.9">
    <molecule id="P29351-2"/>
    <property type="protein sequence ID" value="ENSMUSP00000129124.3"/>
    <property type="gene ID" value="ENSMUSG00000004266.16"/>
</dbReference>
<dbReference type="Ensembl" id="ENSMUST00000174265.2">
    <molecule id="P29351-3"/>
    <property type="protein sequence ID" value="ENSMUSP00000133991.2"/>
    <property type="gene ID" value="ENSMUSG00000004266.16"/>
</dbReference>
<dbReference type="GeneID" id="15170"/>
<dbReference type="KEGG" id="mmu:15170"/>
<dbReference type="UCSC" id="uc009drk.2">
    <molecule id="P29351-1"/>
    <property type="organism name" value="mouse"/>
</dbReference>
<dbReference type="AGR" id="MGI:96055"/>
<dbReference type="CTD" id="5777"/>
<dbReference type="MGI" id="MGI:96055">
    <property type="gene designation" value="Ptpn6"/>
</dbReference>
<dbReference type="VEuPathDB" id="HostDB:ENSMUSG00000004266"/>
<dbReference type="eggNOG" id="KOG0790">
    <property type="taxonomic scope" value="Eukaryota"/>
</dbReference>
<dbReference type="GeneTree" id="ENSGT00940000159480"/>
<dbReference type="HOGENOM" id="CLU_001645_9_10_1"/>
<dbReference type="InParanoid" id="P29351"/>
<dbReference type="OMA" id="VKIMCEN"/>
<dbReference type="OrthoDB" id="8815311at2759"/>
<dbReference type="PhylomeDB" id="P29351"/>
<dbReference type="TreeFam" id="TF351632"/>
<dbReference type="Reactome" id="R-MMU-114604">
    <property type="pathway name" value="GPVI-mediated activation cascade"/>
</dbReference>
<dbReference type="Reactome" id="R-MMU-1433559">
    <property type="pathway name" value="Regulation of KIT signaling"/>
</dbReference>
<dbReference type="Reactome" id="R-MMU-201556">
    <property type="pathway name" value="Signaling by ALK"/>
</dbReference>
<dbReference type="Reactome" id="R-MMU-210990">
    <property type="pathway name" value="PECAM1 interactions"/>
</dbReference>
<dbReference type="Reactome" id="R-MMU-389948">
    <property type="pathway name" value="Co-inhibition by PD-1"/>
</dbReference>
<dbReference type="Reactome" id="R-MMU-432142">
    <property type="pathway name" value="Platelet sensitization by LDL"/>
</dbReference>
<dbReference type="Reactome" id="R-MMU-512988">
    <property type="pathway name" value="Interleukin-3, Interleukin-5 and GM-CSF signaling"/>
</dbReference>
<dbReference type="Reactome" id="R-MMU-5690714">
    <property type="pathway name" value="CD22 mediated BCR regulation"/>
</dbReference>
<dbReference type="Reactome" id="R-MMU-6798695">
    <property type="pathway name" value="Neutrophil degranulation"/>
</dbReference>
<dbReference type="Reactome" id="R-MMU-877300">
    <property type="pathway name" value="Interferon gamma signaling"/>
</dbReference>
<dbReference type="Reactome" id="R-MMU-912526">
    <property type="pathway name" value="Interleukin receptor SHC signaling"/>
</dbReference>
<dbReference type="Reactome" id="R-MMU-912694">
    <property type="pathway name" value="Regulation of IFNA/IFNB signaling"/>
</dbReference>
<dbReference type="Reactome" id="R-MMU-983695">
    <property type="pathway name" value="Antigen activates B Cell Receptor (BCR) leading to generation of second messengers"/>
</dbReference>
<dbReference type="Reactome" id="R-MMU-9927353">
    <property type="pathway name" value="Co-inhibition by BTLA"/>
</dbReference>
<dbReference type="BioGRID-ORCS" id="15170">
    <property type="hits" value="2 hits in 81 CRISPR screens"/>
</dbReference>
<dbReference type="ChiTaRS" id="Ptpn6">
    <property type="organism name" value="mouse"/>
</dbReference>
<dbReference type="PRO" id="PR:P29351"/>
<dbReference type="Proteomes" id="UP000000589">
    <property type="component" value="Chromosome 6"/>
</dbReference>
<dbReference type="RNAct" id="P29351">
    <property type="molecule type" value="protein"/>
</dbReference>
<dbReference type="Bgee" id="ENSMUSG00000004266">
    <property type="expression patterns" value="Expressed in granulocyte and 172 other cell types or tissues"/>
</dbReference>
<dbReference type="ExpressionAtlas" id="P29351">
    <property type="expression patterns" value="baseline and differential"/>
</dbReference>
<dbReference type="GO" id="GO:0042105">
    <property type="term" value="C:alpha-beta T cell receptor complex"/>
    <property type="evidence" value="ECO:0000314"/>
    <property type="project" value="MGI"/>
</dbReference>
<dbReference type="GO" id="GO:0005911">
    <property type="term" value="C:cell-cell junction"/>
    <property type="evidence" value="ECO:0000314"/>
    <property type="project" value="MGI"/>
</dbReference>
<dbReference type="GO" id="GO:0005737">
    <property type="term" value="C:cytoplasm"/>
    <property type="evidence" value="ECO:0000314"/>
    <property type="project" value="UniProt"/>
</dbReference>
<dbReference type="GO" id="GO:0005829">
    <property type="term" value="C:cytosol"/>
    <property type="evidence" value="ECO:0000304"/>
    <property type="project" value="Reactome"/>
</dbReference>
<dbReference type="GO" id="GO:0005730">
    <property type="term" value="C:nucleolus"/>
    <property type="evidence" value="ECO:0007669"/>
    <property type="project" value="Ensembl"/>
</dbReference>
<dbReference type="GO" id="GO:0005654">
    <property type="term" value="C:nucleoplasm"/>
    <property type="evidence" value="ECO:0007669"/>
    <property type="project" value="Ensembl"/>
</dbReference>
<dbReference type="GO" id="GO:0050839">
    <property type="term" value="F:cell adhesion molecule binding"/>
    <property type="evidence" value="ECO:0000353"/>
    <property type="project" value="UniProtKB"/>
</dbReference>
<dbReference type="GO" id="GO:0140031">
    <property type="term" value="F:phosphorylation-dependent protein binding"/>
    <property type="evidence" value="ECO:0007669"/>
    <property type="project" value="Ensembl"/>
</dbReference>
<dbReference type="GO" id="GO:0001784">
    <property type="term" value="F:phosphotyrosine residue binding"/>
    <property type="evidence" value="ECO:0000353"/>
    <property type="project" value="MGI"/>
</dbReference>
<dbReference type="GO" id="GO:0019901">
    <property type="term" value="F:protein kinase binding"/>
    <property type="evidence" value="ECO:0007669"/>
    <property type="project" value="Ensembl"/>
</dbReference>
<dbReference type="GO" id="GO:0004725">
    <property type="term" value="F:protein tyrosine phosphatase activity"/>
    <property type="evidence" value="ECO:0000314"/>
    <property type="project" value="ARUK-UCL"/>
</dbReference>
<dbReference type="GO" id="GO:0042169">
    <property type="term" value="F:SH2 domain binding"/>
    <property type="evidence" value="ECO:0000314"/>
    <property type="project" value="MGI"/>
</dbReference>
<dbReference type="GO" id="GO:0017124">
    <property type="term" value="F:SH3 domain binding"/>
    <property type="evidence" value="ECO:0000314"/>
    <property type="project" value="MGI"/>
</dbReference>
<dbReference type="GO" id="GO:0005001">
    <property type="term" value="F:transmembrane receptor protein tyrosine phosphatase activity"/>
    <property type="evidence" value="ECO:0000250"/>
    <property type="project" value="UniProtKB"/>
</dbReference>
<dbReference type="GO" id="GO:0050853">
    <property type="term" value="P:B cell receptor signaling pathway"/>
    <property type="evidence" value="ECO:0000315"/>
    <property type="project" value="MGI"/>
</dbReference>
<dbReference type="GO" id="GO:0160162">
    <property type="term" value="P:CD27 signaling pathway"/>
    <property type="evidence" value="ECO:0007669"/>
    <property type="project" value="Ensembl"/>
</dbReference>
<dbReference type="GO" id="GO:0030154">
    <property type="term" value="P:cell differentiation"/>
    <property type="evidence" value="ECO:0000250"/>
    <property type="project" value="UniProtKB"/>
</dbReference>
<dbReference type="GO" id="GO:0019221">
    <property type="term" value="P:cytokine-mediated signaling pathway"/>
    <property type="evidence" value="ECO:0000304"/>
    <property type="project" value="MGI"/>
</dbReference>
<dbReference type="GO" id="GO:1905867">
    <property type="term" value="P:epididymis development"/>
    <property type="evidence" value="ECO:0000315"/>
    <property type="project" value="UniProtKB"/>
</dbReference>
<dbReference type="GO" id="GO:0002244">
    <property type="term" value="P:hematopoietic progenitor cell differentiation"/>
    <property type="evidence" value="ECO:0000315"/>
    <property type="project" value="MGI"/>
</dbReference>
<dbReference type="GO" id="GO:0035556">
    <property type="term" value="P:intracellular signal transduction"/>
    <property type="evidence" value="ECO:0000314"/>
    <property type="project" value="MGI"/>
</dbReference>
<dbReference type="GO" id="GO:0000165">
    <property type="term" value="P:MAPK cascade"/>
    <property type="evidence" value="ECO:0000315"/>
    <property type="project" value="MGI"/>
</dbReference>
<dbReference type="GO" id="GO:0035855">
    <property type="term" value="P:megakaryocyte development"/>
    <property type="evidence" value="ECO:0000315"/>
    <property type="project" value="MGI"/>
</dbReference>
<dbReference type="GO" id="GO:0042267">
    <property type="term" value="P:natural killer cell mediated cytotoxicity"/>
    <property type="evidence" value="ECO:0000315"/>
    <property type="project" value="MGI"/>
</dbReference>
<dbReference type="GO" id="GO:0016525">
    <property type="term" value="P:negative regulation of angiogenesis"/>
    <property type="evidence" value="ECO:0007669"/>
    <property type="project" value="Ensembl"/>
</dbReference>
<dbReference type="GO" id="GO:0050859">
    <property type="term" value="P:negative regulation of B cell receptor signaling pathway"/>
    <property type="evidence" value="ECO:0007669"/>
    <property type="project" value="Ensembl"/>
</dbReference>
<dbReference type="GO" id="GO:0002924">
    <property type="term" value="P:negative regulation of humoral immune response mediated by circulating immunoglobulin"/>
    <property type="evidence" value="ECO:0000315"/>
    <property type="project" value="MGI"/>
</dbReference>
<dbReference type="GO" id="GO:0106015">
    <property type="term" value="P:negative regulation of inflammatory response to wounding"/>
    <property type="evidence" value="ECO:0000314"/>
    <property type="project" value="UniProt"/>
</dbReference>
<dbReference type="GO" id="GO:0045824">
    <property type="term" value="P:negative regulation of innate immune response"/>
    <property type="evidence" value="ECO:0007669"/>
    <property type="project" value="Ensembl"/>
</dbReference>
<dbReference type="GO" id="GO:0032715">
    <property type="term" value="P:negative regulation of interleukin-6 production"/>
    <property type="evidence" value="ECO:0000316"/>
    <property type="project" value="ARUK-UCL"/>
</dbReference>
<dbReference type="GO" id="GO:0031665">
    <property type="term" value="P:negative regulation of lipopolysaccharide-mediated signaling pathway"/>
    <property type="evidence" value="ECO:0000316"/>
    <property type="project" value="ARUK-UCL"/>
</dbReference>
<dbReference type="GO" id="GO:0043409">
    <property type="term" value="P:negative regulation of MAPK cascade"/>
    <property type="evidence" value="ECO:0000315"/>
    <property type="project" value="MGI"/>
</dbReference>
<dbReference type="GO" id="GO:0033007">
    <property type="term" value="P:negative regulation of mast cell activation involved in immune response"/>
    <property type="evidence" value="ECO:0000314"/>
    <property type="project" value="UniProtKB"/>
</dbReference>
<dbReference type="GO" id="GO:1902564">
    <property type="term" value="P:negative regulation of neutrophil activation"/>
    <property type="evidence" value="ECO:0007669"/>
    <property type="project" value="Ensembl"/>
</dbReference>
<dbReference type="GO" id="GO:0042130">
    <property type="term" value="P:negative regulation of T cell proliferation"/>
    <property type="evidence" value="ECO:0000315"/>
    <property type="project" value="MGI"/>
</dbReference>
<dbReference type="GO" id="GO:0050860">
    <property type="term" value="P:negative regulation of T cell receptor signaling pathway"/>
    <property type="evidence" value="ECO:0000315"/>
    <property type="project" value="MGI"/>
</dbReference>
<dbReference type="GO" id="GO:0032720">
    <property type="term" value="P:negative regulation of tumor necrosis factor production"/>
    <property type="evidence" value="ECO:0000316"/>
    <property type="project" value="ARUK-UCL"/>
</dbReference>
<dbReference type="GO" id="GO:0070527">
    <property type="term" value="P:platelet aggregation"/>
    <property type="evidence" value="ECO:0000315"/>
    <property type="project" value="MGI"/>
</dbReference>
<dbReference type="GO" id="GO:0030220">
    <property type="term" value="P:platelet formation"/>
    <property type="evidence" value="ECO:0000316"/>
    <property type="project" value="MGI"/>
</dbReference>
<dbReference type="GO" id="GO:0033630">
    <property type="term" value="P:positive regulation of cell adhesion mediated by integrin"/>
    <property type="evidence" value="ECO:0000315"/>
    <property type="project" value="MGI"/>
</dbReference>
<dbReference type="GO" id="GO:0008284">
    <property type="term" value="P:positive regulation of cell population proliferation"/>
    <property type="evidence" value="ECO:0007669"/>
    <property type="project" value="Ensembl"/>
</dbReference>
<dbReference type="GO" id="GO:0051897">
    <property type="term" value="P:positive regulation of phosphatidylinositol 3-kinase/protein kinase B signal transduction"/>
    <property type="evidence" value="ECO:0007669"/>
    <property type="project" value="Ensembl"/>
</dbReference>
<dbReference type="GO" id="GO:0045577">
    <property type="term" value="P:regulation of B cell differentiation"/>
    <property type="evidence" value="ECO:0000315"/>
    <property type="project" value="MGI"/>
</dbReference>
<dbReference type="GO" id="GO:0070372">
    <property type="term" value="P:regulation of ERK1 and ERK2 cascade"/>
    <property type="evidence" value="ECO:0000250"/>
    <property type="project" value="UniProtKB"/>
</dbReference>
<dbReference type="GO" id="GO:2000045">
    <property type="term" value="P:regulation of G1/S transition of mitotic cell cycle"/>
    <property type="evidence" value="ECO:0007669"/>
    <property type="project" value="Ensembl"/>
</dbReference>
<dbReference type="GO" id="GO:0051279">
    <property type="term" value="P:regulation of release of sequestered calcium ion into cytosol"/>
    <property type="evidence" value="ECO:0000316"/>
    <property type="project" value="MGI"/>
</dbReference>
<dbReference type="GO" id="GO:0042098">
    <property type="term" value="P:T cell proliferation"/>
    <property type="evidence" value="ECO:0000315"/>
    <property type="project" value="MGI"/>
</dbReference>
<dbReference type="GO" id="GO:0050852">
    <property type="term" value="P:T cell receptor signaling pathway"/>
    <property type="evidence" value="ECO:0000315"/>
    <property type="project" value="MGI"/>
</dbReference>
<dbReference type="CDD" id="cd14606">
    <property type="entry name" value="PTPc-N6"/>
    <property type="match status" value="1"/>
</dbReference>
<dbReference type="CDD" id="cd09931">
    <property type="entry name" value="SH2_C-SH2_SHP_like"/>
    <property type="match status" value="1"/>
</dbReference>
<dbReference type="CDD" id="cd10340">
    <property type="entry name" value="SH2_N-SH2_SHP_like"/>
    <property type="match status" value="1"/>
</dbReference>
<dbReference type="FunFam" id="3.30.505.10:FF:000012">
    <property type="entry name" value="Tyrosine-protein phosphatase non-receptor type"/>
    <property type="match status" value="1"/>
</dbReference>
<dbReference type="FunFam" id="3.30.505.10:FF:000018">
    <property type="entry name" value="Tyrosine-protein phosphatase non-receptor type"/>
    <property type="match status" value="1"/>
</dbReference>
<dbReference type="FunFam" id="3.90.190.10:FF:000018">
    <property type="entry name" value="Tyrosine-protein phosphatase non-receptor type"/>
    <property type="match status" value="1"/>
</dbReference>
<dbReference type="Gene3D" id="3.90.190.10">
    <property type="entry name" value="Protein tyrosine phosphatase superfamily"/>
    <property type="match status" value="1"/>
</dbReference>
<dbReference type="Gene3D" id="3.30.505.10">
    <property type="entry name" value="SH2 domain"/>
    <property type="match status" value="2"/>
</dbReference>
<dbReference type="InterPro" id="IPR052123">
    <property type="entry name" value="Non-rcpt_Tyr_Phosphatase"/>
</dbReference>
<dbReference type="InterPro" id="IPR029021">
    <property type="entry name" value="Prot-tyrosine_phosphatase-like"/>
</dbReference>
<dbReference type="InterPro" id="IPR000242">
    <property type="entry name" value="PTP_cat"/>
</dbReference>
<dbReference type="InterPro" id="IPR000980">
    <property type="entry name" value="SH2"/>
</dbReference>
<dbReference type="InterPro" id="IPR036860">
    <property type="entry name" value="SH2_dom_sf"/>
</dbReference>
<dbReference type="InterPro" id="IPR016130">
    <property type="entry name" value="Tyr_Pase_AS"/>
</dbReference>
<dbReference type="InterPro" id="IPR003595">
    <property type="entry name" value="Tyr_Pase_cat"/>
</dbReference>
<dbReference type="InterPro" id="IPR000387">
    <property type="entry name" value="Tyr_Pase_dom"/>
</dbReference>
<dbReference type="InterPro" id="IPR012152">
    <property type="entry name" value="Tyr_Pase_non-rcpt_typ-6/11"/>
</dbReference>
<dbReference type="PANTHER" id="PTHR46257">
    <property type="entry name" value="TYROSINE-PROTEIN PHOSPHATASE CORKSCREW"/>
    <property type="match status" value="1"/>
</dbReference>
<dbReference type="PANTHER" id="PTHR46257:SF4">
    <property type="entry name" value="TYROSINE-PROTEIN PHOSPHATASE NON-RECEPTOR TYPE 6"/>
    <property type="match status" value="1"/>
</dbReference>
<dbReference type="Pfam" id="PF00017">
    <property type="entry name" value="SH2"/>
    <property type="match status" value="2"/>
</dbReference>
<dbReference type="Pfam" id="PF00102">
    <property type="entry name" value="Y_phosphatase"/>
    <property type="match status" value="1"/>
</dbReference>
<dbReference type="PIRSF" id="PIRSF000929">
    <property type="entry name" value="Tyr-Ptase_nr_6"/>
    <property type="match status" value="1"/>
</dbReference>
<dbReference type="PRINTS" id="PR00700">
    <property type="entry name" value="PRTYPHPHTASE"/>
</dbReference>
<dbReference type="PRINTS" id="PR00401">
    <property type="entry name" value="SH2DOMAIN"/>
</dbReference>
<dbReference type="SMART" id="SM00194">
    <property type="entry name" value="PTPc"/>
    <property type="match status" value="1"/>
</dbReference>
<dbReference type="SMART" id="SM00404">
    <property type="entry name" value="PTPc_motif"/>
    <property type="match status" value="1"/>
</dbReference>
<dbReference type="SMART" id="SM00252">
    <property type="entry name" value="SH2"/>
    <property type="match status" value="2"/>
</dbReference>
<dbReference type="SUPFAM" id="SSF52799">
    <property type="entry name" value="(Phosphotyrosine protein) phosphatases II"/>
    <property type="match status" value="1"/>
</dbReference>
<dbReference type="SUPFAM" id="SSF55550">
    <property type="entry name" value="SH2 domain"/>
    <property type="match status" value="2"/>
</dbReference>
<dbReference type="PROSITE" id="PS50001">
    <property type="entry name" value="SH2"/>
    <property type="match status" value="2"/>
</dbReference>
<dbReference type="PROSITE" id="PS00383">
    <property type="entry name" value="TYR_PHOSPHATASE_1"/>
    <property type="match status" value="1"/>
</dbReference>
<dbReference type="PROSITE" id="PS50056">
    <property type="entry name" value="TYR_PHOSPHATASE_2"/>
    <property type="match status" value="1"/>
</dbReference>
<dbReference type="PROSITE" id="PS50055">
    <property type="entry name" value="TYR_PHOSPHATASE_PTP"/>
    <property type="match status" value="1"/>
</dbReference>
<organism>
    <name type="scientific">Mus musculus</name>
    <name type="common">Mouse</name>
    <dbReference type="NCBI Taxonomy" id="10090"/>
    <lineage>
        <taxon>Eukaryota</taxon>
        <taxon>Metazoa</taxon>
        <taxon>Chordata</taxon>
        <taxon>Craniata</taxon>
        <taxon>Vertebrata</taxon>
        <taxon>Euteleostomi</taxon>
        <taxon>Mammalia</taxon>
        <taxon>Eutheria</taxon>
        <taxon>Euarchontoglires</taxon>
        <taxon>Glires</taxon>
        <taxon>Rodentia</taxon>
        <taxon>Myomorpha</taxon>
        <taxon>Muroidea</taxon>
        <taxon>Muridae</taxon>
        <taxon>Murinae</taxon>
        <taxon>Mus</taxon>
        <taxon>Mus</taxon>
    </lineage>
</organism>
<evidence type="ECO:0000250" key="1"/>
<evidence type="ECO:0000250" key="2">
    <source>
        <dbReference type="UniProtKB" id="P29350"/>
    </source>
</evidence>
<evidence type="ECO:0000250" key="3">
    <source>
        <dbReference type="UniProtKB" id="P81718"/>
    </source>
</evidence>
<evidence type="ECO:0000255" key="4">
    <source>
        <dbReference type="PROSITE-ProRule" id="PRU00160"/>
    </source>
</evidence>
<evidence type="ECO:0000255" key="5">
    <source>
        <dbReference type="PROSITE-ProRule" id="PRU00191"/>
    </source>
</evidence>
<evidence type="ECO:0000255" key="6">
    <source>
        <dbReference type="PROSITE-ProRule" id="PRU10044"/>
    </source>
</evidence>
<evidence type="ECO:0000256" key="7">
    <source>
        <dbReference type="SAM" id="MobiDB-lite"/>
    </source>
</evidence>
<evidence type="ECO:0000269" key="8">
    <source>
    </source>
</evidence>
<evidence type="ECO:0000269" key="9">
    <source>
    </source>
</evidence>
<evidence type="ECO:0000269" key="10">
    <source>
    </source>
</evidence>
<evidence type="ECO:0000269" key="11">
    <source>
    </source>
</evidence>
<evidence type="ECO:0000269" key="12">
    <source>
    </source>
</evidence>
<evidence type="ECO:0000269" key="13">
    <source>
    </source>
</evidence>
<evidence type="ECO:0000269" key="14">
    <source>
    </source>
</evidence>
<evidence type="ECO:0000269" key="15">
    <source>
    </source>
</evidence>
<evidence type="ECO:0000269" key="16">
    <source>
    </source>
</evidence>
<evidence type="ECO:0000269" key="17">
    <source>
    </source>
</evidence>
<evidence type="ECO:0000269" key="18">
    <source>
    </source>
</evidence>
<evidence type="ECO:0000269" key="19">
    <source>
    </source>
</evidence>
<evidence type="ECO:0000269" key="20">
    <source>
    </source>
</evidence>
<evidence type="ECO:0000269" key="21">
    <source>
    </source>
</evidence>
<evidence type="ECO:0000305" key="22"/>
<evidence type="ECO:0007744" key="23">
    <source>
    </source>
</evidence>
<evidence type="ECO:0007744" key="24">
    <source>
    </source>
</evidence>
<comment type="function">
    <text evidence="2 8 17 18">Tyrosine phosphatase enzyme that plays important roles in controlling immune signaling pathways and fundamental physiological processes such as hematopoiesis. Dephosphorylates and negatively regulate several receptor tyrosine kinases (RTKs) such as EGFR, PDGFR and FGFR, thereby modulating their signaling activities (PubMed:9528781). When recruited to immunoreceptor tyrosine-based inhibitory motif (ITIM)-containing receptors such as immunoglobulin-like transcript 2/LILRB1, programmed cell death protein 1/PDCD1, CD3D, CD22, CLEC12A and other receptors involved in immune regulation, initiates their dephosphorylation and subsequently inhibits downstream signaling events (PubMed:10026201, PubMed:33990399). Modulates the signaling of several cytokine receptors including IL-4 receptor. Additionally, targets multiple cytoplasmic signaling molecules including STING1, LCK or STAT1 among others involved in diverse cellular processes including modulation of T-cell activation or cGAS-STING signaling. Within the nucleus, negatively regulates the activity of some transcription factors such as NFAT5 via direct dephosphorylation. Also acts as a key transcriptional regulator of hepatic gluconeogenesis by controlling recruitment of RNA polymerase II to the PCK1 promoter together with STAT5A.</text>
</comment>
<comment type="catalytic activity">
    <reaction evidence="6 17">
        <text>O-phospho-L-tyrosyl-[protein] + H2O = L-tyrosyl-[protein] + phosphate</text>
        <dbReference type="Rhea" id="RHEA:10684"/>
        <dbReference type="Rhea" id="RHEA-COMP:10136"/>
        <dbReference type="Rhea" id="RHEA-COMP:20101"/>
        <dbReference type="ChEBI" id="CHEBI:15377"/>
        <dbReference type="ChEBI" id="CHEBI:43474"/>
        <dbReference type="ChEBI" id="CHEBI:46858"/>
        <dbReference type="ChEBI" id="CHEBI:61978"/>
        <dbReference type="EC" id="3.1.3.48"/>
    </reaction>
</comment>
<comment type="subunit">
    <text evidence="2 3 8 9 13 14 15 16 18 19 20 21">Monomer. Interacts with PIRB; when PIRB is phosphorylated by LYN at 'Tyr-794' and 'Tyr-824' (PubMed:10327049). Interacts with MTUS1 (By similarity). Interacts with MILR1 (tyrosine-phosphorylated) (PubMed:20526344). Interacts with KIT (PubMed:9528781). Interacts with SIRPA/PTPNS1 (PubMed:9712903). Interacts with LILRB1 and LILRB2. Interacts with LILRB4. Interacts with FCRL2 and FCRL4. Interacts with FCRL3 and FCRL6 (tyrosine phosphorylated form). Interacts with CD84. Interacts with CD300LF (PubMed:14662855). Interacts with CDK2. Interacts with KIR2DL1; the interaction is enhanced by ARRB2. Interacts (via SH2 1 domain) with ROS1; the interaction is direct and promotes ROS1 dephosphorylation. Interacts with EGFR; inhibits EGFR-dependent activation of MAPK/ERK. Interacts with the tyrosine phosphorylated form of PDPK1 (By similarity). Interacts with CEACAM1 (via cytoplasmic domain); this interaction depends on the monomer/dimer equilibrium and is phosphorylation-dependent (PubMed:19948503, PubMed:9867848). Interacts with MPIG6B (via ITIM motif) (PubMed:23112346). Interacts with KLRI1 and KLRI2 (By similarity). Interacts with moesin/MSN. Interacts with Lilrb4a (when tyrosine phosphorylated); the interaction enhances Lilrb4a-mediated inhibition of mast cell activation (PubMed:10026201, PubMed:9973385). Interacts with CLEC12B (via ITIM motif). Interacts with polymerase II components POLR2C and POLR2J; these interactions recruit RNA polymerase II to the PCK1 promoter. Interacts with TNFRSF10A; this interaction enables the inhibition of T-cell receptor signaling via LCK (By similarity).</text>
</comment>
<comment type="interaction">
    <interactant intactId="EBI-2620699">
        <id>P29351</id>
    </interactant>
    <interactant intactId="EBI-911352">
        <id>Q91YS8</id>
        <label>Camk1</label>
    </interactant>
    <organismsDiffer>false</organismsDiffer>
    <experiments>3</experiments>
</comment>
<comment type="interaction">
    <interactant intactId="EBI-2620699">
        <id>P29351</id>
    </interactant>
    <interactant intactId="EBI-300059">
        <id>P35329</id>
        <label>Cd22</label>
    </interactant>
    <organismsDiffer>false</organismsDiffer>
    <experiments>5</experiments>
</comment>
<comment type="interaction">
    <interactant intactId="EBI-2620699">
        <id>P29351</id>
    </interactant>
    <interactant intactId="EBI-641738">
        <id>Q9Z1S8</id>
        <label>Gab2</label>
    </interactant>
    <organismsDiffer>false</organismsDiffer>
    <experiments>2</experiments>
</comment>
<comment type="interaction">
    <interactant intactId="EBI-2620699">
        <id>P29351</id>
    </interactant>
    <interactant intactId="EBI-647118">
        <id>P42225</id>
        <label>Stat1</label>
    </interactant>
    <organismsDiffer>false</organismsDiffer>
    <experiments>2</experiments>
</comment>
<comment type="interaction">
    <interactant intactId="EBI-2620699">
        <id>P29351</id>
    </interactant>
    <interactant intactId="EBI-2504426">
        <id>B7UM99</id>
        <label>tir</label>
    </interactant>
    <organismsDiffer>true</organismsDiffer>
    <experiments>2</experiments>
</comment>
<comment type="subcellular location">
    <subcellularLocation>
        <location>Cytoplasm</location>
    </subcellularLocation>
    <subcellularLocation>
        <location evidence="1">Nucleus</location>
    </subcellularLocation>
    <text evidence="1">In neurons, translocates into the nucleus after treatment with angiotensin II. Shuttles between the cytoplasm and nucleus via its association with PDPK1 (By similarity).</text>
</comment>
<comment type="alternative products">
    <event type="alternative splicing"/>
    <isoform>
        <id>P29351-1</id>
        <name>1</name>
        <sequence type="displayed"/>
    </isoform>
    <isoform>
        <id>P29351-2</id>
        <name>2</name>
        <sequence type="described" ref="VSP_005131"/>
    </isoform>
    <isoform>
        <id>P29351-3</id>
        <name>3</name>
        <sequence type="described" ref="VSP_005132 VSP_005133"/>
    </isoform>
</comment>
<comment type="tissue specificity">
    <text evidence="11">Expressed predominantly in hematopoietic cells.</text>
</comment>
<comment type="domain">
    <text evidence="1">The N-terminal SH2 domain functions as an auto-inhibitory domain, blocking the catalytic domain in the ligand-free close conformation.</text>
</comment>
<comment type="PTM">
    <text evidence="2 10 18">Phosphorylated on tyrosine residues. Binding of KITLG/SCF to KIT increases tyrosine phosphorylation (PubMed:1385421, PubMed:9528781). Phosphorylation at Tyr-564 by LYN enhances phosphatase activity. Phosphorylation at Thr-394 by TAOK3 leads to polyubiquitination and subsequent proteasomal degradation (By similarity).</text>
</comment>
<comment type="PTM">
    <text evidence="2">Ubiquitinated after phosphorylation by TAOK3. Ubiquitinated by a cooperation between ITCH and WWP2 via 'Lys-27'-mediated polyubiquitin chains resulting in the reduction of its association with LCK.</text>
</comment>
<comment type="disease">
    <text>Defects in Ptpn6 are the cause of the motheaten (me) or viable motheaten (mev) phenotypes. Mice homozygous for the recessive allelic mutations develop severe defects in hematopoiesis.</text>
</comment>
<comment type="similarity">
    <text evidence="22">Belongs to the protein-tyrosine phosphatase family. Non-receptor class 2 subfamily.</text>
</comment>